<reference key="1">
    <citation type="journal article" date="2005" name="Nucleic Acids Res.">
        <title>Genome dynamics and diversity of Shigella species, the etiologic agents of bacillary dysentery.</title>
        <authorList>
            <person name="Yang F."/>
            <person name="Yang J."/>
            <person name="Zhang X."/>
            <person name="Chen L."/>
            <person name="Jiang Y."/>
            <person name="Yan Y."/>
            <person name="Tang X."/>
            <person name="Wang J."/>
            <person name="Xiong Z."/>
            <person name="Dong J."/>
            <person name="Xue Y."/>
            <person name="Zhu Y."/>
            <person name="Xu X."/>
            <person name="Sun L."/>
            <person name="Chen S."/>
            <person name="Nie H."/>
            <person name="Peng J."/>
            <person name="Xu J."/>
            <person name="Wang Y."/>
            <person name="Yuan Z."/>
            <person name="Wen Y."/>
            <person name="Yao Z."/>
            <person name="Shen Y."/>
            <person name="Qiang B."/>
            <person name="Hou Y."/>
            <person name="Yu J."/>
            <person name="Jin Q."/>
        </authorList>
    </citation>
    <scope>NUCLEOTIDE SEQUENCE [LARGE SCALE GENOMIC DNA]</scope>
    <source>
        <strain>Sb227</strain>
    </source>
</reference>
<proteinExistence type="inferred from homology"/>
<protein>
    <recommendedName>
        <fullName evidence="1">tRNA1(Val) (adenine(37)-N6)-methyltransferase</fullName>
        <ecNumber evidence="1">2.1.1.223</ecNumber>
    </recommendedName>
    <alternativeName>
        <fullName evidence="1">tRNA m6A37 methyltransferase</fullName>
    </alternativeName>
</protein>
<sequence>MSQSTSVLRRNGFTFKQFFVAHDRCAMKVGTDGILLGAWAPVAGVKRCLDIGAGSGLLALMLAQRTSDSVIIDAVELESEAAAQAQENINQSPWAERINVHTADIQQWLTQQTVRFDLIISNPPYYQQGVECAIPQREQARYTTTLDHPSLLTCAAECITEEGFFCVVLPEQIGNGFTELALSMGWHLRLRTDVAENEARLPHRVLLAFSPQAGECFSDRLVIRGPDQNYSEAYTALTQAFYLFM</sequence>
<name>TRMN6_SHIBS</name>
<comment type="function">
    <text evidence="1">Specifically methylates the adenine in position 37 of tRNA(1)(Val) (anticodon cmo5UAC).</text>
</comment>
<comment type="catalytic activity">
    <reaction evidence="1">
        <text>adenosine(37) in tRNA1(Val) + S-adenosyl-L-methionine = N(6)-methyladenosine(37) in tRNA1(Val) + S-adenosyl-L-homocysteine + H(+)</text>
        <dbReference type="Rhea" id="RHEA:43160"/>
        <dbReference type="Rhea" id="RHEA-COMP:10369"/>
        <dbReference type="Rhea" id="RHEA-COMP:10370"/>
        <dbReference type="ChEBI" id="CHEBI:15378"/>
        <dbReference type="ChEBI" id="CHEBI:57856"/>
        <dbReference type="ChEBI" id="CHEBI:59789"/>
        <dbReference type="ChEBI" id="CHEBI:74411"/>
        <dbReference type="ChEBI" id="CHEBI:74449"/>
        <dbReference type="EC" id="2.1.1.223"/>
    </reaction>
</comment>
<comment type="subcellular location">
    <subcellularLocation>
        <location evidence="1">Cytoplasm</location>
    </subcellularLocation>
</comment>
<comment type="similarity">
    <text evidence="1">Belongs to the methyltransferase superfamily. tRNA (adenine-N(6)-)-methyltransferase family.</text>
</comment>
<comment type="sequence caution" evidence="2">
    <conflict type="erroneous initiation">
        <sequence resource="EMBL-CDS" id="ABB67147"/>
    </conflict>
</comment>
<keyword id="KW-0963">Cytoplasm</keyword>
<keyword id="KW-0489">Methyltransferase</keyword>
<keyword id="KW-0949">S-adenosyl-L-methionine</keyword>
<keyword id="KW-0808">Transferase</keyword>
<keyword id="KW-0819">tRNA processing</keyword>
<evidence type="ECO:0000255" key="1">
    <source>
        <dbReference type="HAMAP-Rule" id="MF_01872"/>
    </source>
</evidence>
<evidence type="ECO:0000305" key="2"/>
<gene>
    <name evidence="1" type="primary">yfiC</name>
    <name type="ordered locus">SBO_2605</name>
</gene>
<feature type="chain" id="PRO_0000387434" description="tRNA1(Val) (adenine(37)-N6)-methyltransferase">
    <location>
        <begin position="1"/>
        <end position="245"/>
    </location>
</feature>
<dbReference type="EC" id="2.1.1.223" evidence="1"/>
<dbReference type="EMBL" id="CP000036">
    <property type="protein sequence ID" value="ABB67147.1"/>
    <property type="status" value="ALT_INIT"/>
    <property type="molecule type" value="Genomic_DNA"/>
</dbReference>
<dbReference type="SMR" id="Q31XR1"/>
<dbReference type="KEGG" id="sbo:SBO_2605"/>
<dbReference type="HOGENOM" id="CLU_061983_0_0_6"/>
<dbReference type="Proteomes" id="UP000007067">
    <property type="component" value="Chromosome"/>
</dbReference>
<dbReference type="GO" id="GO:0005737">
    <property type="term" value="C:cytoplasm"/>
    <property type="evidence" value="ECO:0007669"/>
    <property type="project" value="UniProtKB-SubCell"/>
</dbReference>
<dbReference type="GO" id="GO:0003676">
    <property type="term" value="F:nucleic acid binding"/>
    <property type="evidence" value="ECO:0007669"/>
    <property type="project" value="InterPro"/>
</dbReference>
<dbReference type="GO" id="GO:0016430">
    <property type="term" value="F:tRNA (adenine-N6)-methyltransferase activity"/>
    <property type="evidence" value="ECO:0007669"/>
    <property type="project" value="UniProtKB-UniRule"/>
</dbReference>
<dbReference type="GO" id="GO:0032259">
    <property type="term" value="P:methylation"/>
    <property type="evidence" value="ECO:0007669"/>
    <property type="project" value="UniProtKB-KW"/>
</dbReference>
<dbReference type="GO" id="GO:0008033">
    <property type="term" value="P:tRNA processing"/>
    <property type="evidence" value="ECO:0007669"/>
    <property type="project" value="UniProtKB-UniRule"/>
</dbReference>
<dbReference type="CDD" id="cd02440">
    <property type="entry name" value="AdoMet_MTases"/>
    <property type="match status" value="1"/>
</dbReference>
<dbReference type="FunFam" id="3.40.50.150:FF:000087">
    <property type="entry name" value="tRNA1(Val) (adenine(37)-N6)-methyltransferase"/>
    <property type="match status" value="1"/>
</dbReference>
<dbReference type="Gene3D" id="3.40.50.150">
    <property type="entry name" value="Vaccinia Virus protein VP39"/>
    <property type="match status" value="1"/>
</dbReference>
<dbReference type="HAMAP" id="MF_01872">
    <property type="entry name" value="tRNA_methyltr_YfiC"/>
    <property type="match status" value="1"/>
</dbReference>
<dbReference type="InterPro" id="IPR002052">
    <property type="entry name" value="DNA_methylase_N6_adenine_CS"/>
</dbReference>
<dbReference type="InterPro" id="IPR029063">
    <property type="entry name" value="SAM-dependent_MTases_sf"/>
</dbReference>
<dbReference type="InterPro" id="IPR007848">
    <property type="entry name" value="Small_mtfrase_dom"/>
</dbReference>
<dbReference type="InterPro" id="IPR050210">
    <property type="entry name" value="tRNA_Adenine-N(6)_MTase"/>
</dbReference>
<dbReference type="InterPro" id="IPR022882">
    <property type="entry name" value="tRNA_adenine-N6_MeTrfase"/>
</dbReference>
<dbReference type="NCBIfam" id="NF047853">
    <property type="entry name" value="tRm6a37MtseTrmN"/>
    <property type="match status" value="1"/>
</dbReference>
<dbReference type="PANTHER" id="PTHR47739">
    <property type="entry name" value="TRNA1(VAL) (ADENINE(37)-N6)-METHYLTRANSFERASE"/>
    <property type="match status" value="1"/>
</dbReference>
<dbReference type="PANTHER" id="PTHR47739:SF1">
    <property type="entry name" value="TRNA1(VAL) (ADENINE(37)-N6)-METHYLTRANSFERASE"/>
    <property type="match status" value="1"/>
</dbReference>
<dbReference type="Pfam" id="PF05175">
    <property type="entry name" value="MTS"/>
    <property type="match status" value="1"/>
</dbReference>
<dbReference type="SUPFAM" id="SSF53335">
    <property type="entry name" value="S-adenosyl-L-methionine-dependent methyltransferases"/>
    <property type="match status" value="1"/>
</dbReference>
<dbReference type="PROSITE" id="PS00092">
    <property type="entry name" value="N6_MTASE"/>
    <property type="match status" value="1"/>
</dbReference>
<accession>Q31XR1</accession>
<organism>
    <name type="scientific">Shigella boydii serotype 4 (strain Sb227)</name>
    <dbReference type="NCBI Taxonomy" id="300268"/>
    <lineage>
        <taxon>Bacteria</taxon>
        <taxon>Pseudomonadati</taxon>
        <taxon>Pseudomonadota</taxon>
        <taxon>Gammaproteobacteria</taxon>
        <taxon>Enterobacterales</taxon>
        <taxon>Enterobacteriaceae</taxon>
        <taxon>Shigella</taxon>
    </lineage>
</organism>